<comment type="similarity">
    <text evidence="1">Belongs to the bacterial ribosomal protein bL32 family.</text>
</comment>
<dbReference type="EMBL" id="AM421808">
    <property type="protein sequence ID" value="CAM09623.1"/>
    <property type="molecule type" value="Genomic_DNA"/>
</dbReference>
<dbReference type="RefSeq" id="WP_002214744.1">
    <property type="nucleotide sequence ID" value="NC_008767.1"/>
</dbReference>
<dbReference type="SMR" id="A1KRZ4"/>
<dbReference type="GeneID" id="83615132"/>
<dbReference type="KEGG" id="nmc:NMC0312"/>
<dbReference type="HOGENOM" id="CLU_129084_2_1_4"/>
<dbReference type="Proteomes" id="UP000002286">
    <property type="component" value="Chromosome"/>
</dbReference>
<dbReference type="GO" id="GO:0015934">
    <property type="term" value="C:large ribosomal subunit"/>
    <property type="evidence" value="ECO:0007669"/>
    <property type="project" value="InterPro"/>
</dbReference>
<dbReference type="GO" id="GO:0003735">
    <property type="term" value="F:structural constituent of ribosome"/>
    <property type="evidence" value="ECO:0007669"/>
    <property type="project" value="InterPro"/>
</dbReference>
<dbReference type="GO" id="GO:0006412">
    <property type="term" value="P:translation"/>
    <property type="evidence" value="ECO:0007669"/>
    <property type="project" value="UniProtKB-UniRule"/>
</dbReference>
<dbReference type="HAMAP" id="MF_00340">
    <property type="entry name" value="Ribosomal_bL32"/>
    <property type="match status" value="1"/>
</dbReference>
<dbReference type="InterPro" id="IPR002677">
    <property type="entry name" value="Ribosomal_bL32"/>
</dbReference>
<dbReference type="InterPro" id="IPR044957">
    <property type="entry name" value="Ribosomal_bL32_bact"/>
</dbReference>
<dbReference type="InterPro" id="IPR011332">
    <property type="entry name" value="Ribosomal_zn-bd"/>
</dbReference>
<dbReference type="NCBIfam" id="TIGR01031">
    <property type="entry name" value="rpmF_bact"/>
    <property type="match status" value="1"/>
</dbReference>
<dbReference type="PANTHER" id="PTHR35534">
    <property type="entry name" value="50S RIBOSOMAL PROTEIN L32"/>
    <property type="match status" value="1"/>
</dbReference>
<dbReference type="PANTHER" id="PTHR35534:SF1">
    <property type="entry name" value="LARGE RIBOSOMAL SUBUNIT PROTEIN BL32"/>
    <property type="match status" value="1"/>
</dbReference>
<dbReference type="Pfam" id="PF01783">
    <property type="entry name" value="Ribosomal_L32p"/>
    <property type="match status" value="1"/>
</dbReference>
<dbReference type="SUPFAM" id="SSF57829">
    <property type="entry name" value="Zn-binding ribosomal proteins"/>
    <property type="match status" value="1"/>
</dbReference>
<protein>
    <recommendedName>
        <fullName evidence="1">Large ribosomal subunit protein bL32</fullName>
    </recommendedName>
    <alternativeName>
        <fullName evidence="3">50S ribosomal protein L32</fullName>
    </alternativeName>
</protein>
<keyword id="KW-0687">Ribonucleoprotein</keyword>
<keyword id="KW-0689">Ribosomal protein</keyword>
<name>RL32_NEIMF</name>
<sequence>MAVQQNKKSPSKRGMHRSHDALTAPALSVDSTTGEVHRPHHISPNGMYRGRKVVKAKGE</sequence>
<proteinExistence type="inferred from homology"/>
<gene>
    <name evidence="1" type="primary">rpmF</name>
    <name type="ordered locus">NMC0312</name>
</gene>
<accession>A1KRZ4</accession>
<feature type="chain" id="PRO_0000296513" description="Large ribosomal subunit protein bL32">
    <location>
        <begin position="1"/>
        <end position="59"/>
    </location>
</feature>
<feature type="region of interest" description="Disordered" evidence="2">
    <location>
        <begin position="1"/>
        <end position="59"/>
    </location>
</feature>
<feature type="compositionally biased region" description="Basic residues" evidence="2">
    <location>
        <begin position="49"/>
        <end position="59"/>
    </location>
</feature>
<evidence type="ECO:0000255" key="1">
    <source>
        <dbReference type="HAMAP-Rule" id="MF_00340"/>
    </source>
</evidence>
<evidence type="ECO:0000256" key="2">
    <source>
        <dbReference type="SAM" id="MobiDB-lite"/>
    </source>
</evidence>
<evidence type="ECO:0000305" key="3"/>
<organism>
    <name type="scientific">Neisseria meningitidis serogroup C / serotype 2a (strain ATCC 700532 / DSM 15464 / FAM18)</name>
    <dbReference type="NCBI Taxonomy" id="272831"/>
    <lineage>
        <taxon>Bacteria</taxon>
        <taxon>Pseudomonadati</taxon>
        <taxon>Pseudomonadota</taxon>
        <taxon>Betaproteobacteria</taxon>
        <taxon>Neisseriales</taxon>
        <taxon>Neisseriaceae</taxon>
        <taxon>Neisseria</taxon>
    </lineage>
</organism>
<reference key="1">
    <citation type="journal article" date="2007" name="PLoS Genet.">
        <title>Meningococcal genetic variation mechanisms viewed through comparative analysis of serogroup C strain FAM18.</title>
        <authorList>
            <person name="Bentley S.D."/>
            <person name="Vernikos G.S."/>
            <person name="Snyder L.A.S."/>
            <person name="Churcher C."/>
            <person name="Arrowsmith C."/>
            <person name="Chillingworth T."/>
            <person name="Cronin A."/>
            <person name="Davis P.H."/>
            <person name="Holroyd N.E."/>
            <person name="Jagels K."/>
            <person name="Maddison M."/>
            <person name="Moule S."/>
            <person name="Rabbinowitsch E."/>
            <person name="Sharp S."/>
            <person name="Unwin L."/>
            <person name="Whitehead S."/>
            <person name="Quail M.A."/>
            <person name="Achtman M."/>
            <person name="Barrell B.G."/>
            <person name="Saunders N.J."/>
            <person name="Parkhill J."/>
        </authorList>
    </citation>
    <scope>NUCLEOTIDE SEQUENCE [LARGE SCALE GENOMIC DNA]</scope>
    <source>
        <strain>ATCC 700532 / DSM 15464 / FAM18</strain>
    </source>
</reference>